<dbReference type="EMBL" id="AF343659">
    <property type="status" value="NOT_ANNOTATED_CDS"/>
    <property type="molecule type" value="mRNA"/>
</dbReference>
<dbReference type="EMBL" id="AF397452">
    <property type="protein sequence ID" value="AAK93970.1"/>
    <property type="molecule type" value="mRNA"/>
</dbReference>
<dbReference type="EMBL" id="AF329490">
    <property type="protein sequence ID" value="AAL23900.1"/>
    <property type="molecule type" value="mRNA"/>
</dbReference>
<dbReference type="EMBL" id="AF329492">
    <property type="protein sequence ID" value="AAL23902.1"/>
    <property type="molecule type" value="mRNA"/>
</dbReference>
<dbReference type="EMBL" id="EF064731">
    <property type="protein sequence ID" value="ABK41914.1"/>
    <property type="molecule type" value="Genomic_DNA"/>
</dbReference>
<dbReference type="EMBL" id="CH471121">
    <property type="protein sequence ID" value="EAW52883.1"/>
    <property type="molecule type" value="Genomic_DNA"/>
</dbReference>
<dbReference type="EMBL" id="BC125173">
    <property type="protein sequence ID" value="AAI25174.1"/>
    <property type="molecule type" value="mRNA"/>
</dbReference>
<dbReference type="EMBL" id="BC125174">
    <property type="protein sequence ID" value="AAI25175.1"/>
    <property type="molecule type" value="mRNA"/>
</dbReference>
<dbReference type="CCDS" id="CCDS1166.1">
    <molecule id="Q96PJ5-1"/>
</dbReference>
<dbReference type="RefSeq" id="NP_112572.1">
    <molecule id="Q96PJ5-1"/>
    <property type="nucleotide sequence ID" value="NM_031282.3"/>
</dbReference>
<dbReference type="SMR" id="Q96PJ5"/>
<dbReference type="BioGRID" id="123641">
    <property type="interactions" value="44"/>
</dbReference>
<dbReference type="FunCoup" id="Q96PJ5">
    <property type="interactions" value="25"/>
</dbReference>
<dbReference type="IntAct" id="Q96PJ5">
    <property type="interactions" value="14"/>
</dbReference>
<dbReference type="STRING" id="9606.ENSP00000271532"/>
<dbReference type="GlyCosmos" id="Q96PJ5">
    <property type="glycosylation" value="1 site, No reported glycans"/>
</dbReference>
<dbReference type="GlyGen" id="Q96PJ5">
    <property type="glycosylation" value="1 site"/>
</dbReference>
<dbReference type="iPTMnet" id="Q96PJ5"/>
<dbReference type="PhosphoSitePlus" id="Q96PJ5"/>
<dbReference type="SwissPalm" id="Q96PJ5"/>
<dbReference type="BioMuta" id="FCRL4"/>
<dbReference type="DMDM" id="74761029"/>
<dbReference type="MassIVE" id="Q96PJ5"/>
<dbReference type="PaxDb" id="9606-ENSP00000271532"/>
<dbReference type="PeptideAtlas" id="Q96PJ5"/>
<dbReference type="Antibodypedia" id="34231">
    <property type="antibodies" value="197 antibodies from 26 providers"/>
</dbReference>
<dbReference type="DNASU" id="83417"/>
<dbReference type="Ensembl" id="ENST00000271532.2">
    <molecule id="Q96PJ5-1"/>
    <property type="protein sequence ID" value="ENSP00000271532.1"/>
    <property type="gene ID" value="ENSG00000163518.11"/>
</dbReference>
<dbReference type="GeneID" id="83417"/>
<dbReference type="KEGG" id="hsa:83417"/>
<dbReference type="MANE-Select" id="ENST00000271532.2">
    <property type="protein sequence ID" value="ENSP00000271532.1"/>
    <property type="RefSeq nucleotide sequence ID" value="NM_031282.3"/>
    <property type="RefSeq protein sequence ID" value="NP_112572.1"/>
</dbReference>
<dbReference type="UCSC" id="uc001fqw.3">
    <molecule id="Q96PJ5-1"/>
    <property type="organism name" value="human"/>
</dbReference>
<dbReference type="AGR" id="HGNC:18507"/>
<dbReference type="CTD" id="83417"/>
<dbReference type="DisGeNET" id="83417"/>
<dbReference type="GeneCards" id="FCRL4"/>
<dbReference type="HGNC" id="HGNC:18507">
    <property type="gene designation" value="FCRL4"/>
</dbReference>
<dbReference type="HPA" id="ENSG00000163518">
    <property type="expression patterns" value="Tissue enriched (lymphoid)"/>
</dbReference>
<dbReference type="MIM" id="605876">
    <property type="type" value="gene"/>
</dbReference>
<dbReference type="neXtProt" id="NX_Q96PJ5"/>
<dbReference type="OpenTargets" id="ENSG00000163518"/>
<dbReference type="PharmGKB" id="PA142671768"/>
<dbReference type="VEuPathDB" id="HostDB:ENSG00000163518"/>
<dbReference type="eggNOG" id="ENOG502S65W">
    <property type="taxonomic scope" value="Eukaryota"/>
</dbReference>
<dbReference type="GeneTree" id="ENSGT01050000244808"/>
<dbReference type="HOGENOM" id="CLU_023383_7_1_1"/>
<dbReference type="InParanoid" id="Q96PJ5"/>
<dbReference type="OMA" id="YQHYWRE"/>
<dbReference type="OrthoDB" id="6151406at2759"/>
<dbReference type="PAN-GO" id="Q96PJ5">
    <property type="GO annotations" value="3 GO annotations based on evolutionary models"/>
</dbReference>
<dbReference type="PhylomeDB" id="Q96PJ5"/>
<dbReference type="TreeFam" id="TF351107"/>
<dbReference type="PathwayCommons" id="Q96PJ5"/>
<dbReference type="SignaLink" id="Q96PJ5"/>
<dbReference type="BioGRID-ORCS" id="83417">
    <property type="hits" value="9 hits in 1146 CRISPR screens"/>
</dbReference>
<dbReference type="ChiTaRS" id="FCRL4">
    <property type="organism name" value="human"/>
</dbReference>
<dbReference type="GeneWiki" id="FCRL4"/>
<dbReference type="GenomeRNAi" id="83417"/>
<dbReference type="Pharos" id="Q96PJ5">
    <property type="development level" value="Tbio"/>
</dbReference>
<dbReference type="PRO" id="PR:Q96PJ5"/>
<dbReference type="Proteomes" id="UP000005640">
    <property type="component" value="Chromosome 1"/>
</dbReference>
<dbReference type="RNAct" id="Q96PJ5">
    <property type="molecule type" value="protein"/>
</dbReference>
<dbReference type="Bgee" id="ENSG00000163518">
    <property type="expression patterns" value="Expressed in buccal mucosa cell and 35 other cell types or tissues"/>
</dbReference>
<dbReference type="GO" id="GO:0009986">
    <property type="term" value="C:cell surface"/>
    <property type="evidence" value="ECO:0000314"/>
    <property type="project" value="UniProtKB"/>
</dbReference>
<dbReference type="GO" id="GO:0009897">
    <property type="term" value="C:external side of plasma membrane"/>
    <property type="evidence" value="ECO:0000318"/>
    <property type="project" value="GO_Central"/>
</dbReference>
<dbReference type="GO" id="GO:0004888">
    <property type="term" value="F:transmembrane signaling receptor activity"/>
    <property type="evidence" value="ECO:0000318"/>
    <property type="project" value="GO_Central"/>
</dbReference>
<dbReference type="GO" id="GO:0002250">
    <property type="term" value="P:adaptive immune response"/>
    <property type="evidence" value="ECO:0007669"/>
    <property type="project" value="UniProtKB-KW"/>
</dbReference>
<dbReference type="GO" id="GO:0007166">
    <property type="term" value="P:cell surface receptor signaling pathway"/>
    <property type="evidence" value="ECO:0000318"/>
    <property type="project" value="GO_Central"/>
</dbReference>
<dbReference type="GO" id="GO:0006955">
    <property type="term" value="P:immune response"/>
    <property type="evidence" value="ECO:0000318"/>
    <property type="project" value="GO_Central"/>
</dbReference>
<dbReference type="FunFam" id="2.60.40.10:FF:001308">
    <property type="entry name" value="Fc receptor like 4"/>
    <property type="match status" value="1"/>
</dbReference>
<dbReference type="FunFam" id="2.60.40.10:FF:001884">
    <property type="entry name" value="Fc receptor like 4"/>
    <property type="match status" value="1"/>
</dbReference>
<dbReference type="FunFam" id="2.60.40.10:FF:002507">
    <property type="entry name" value="Fc receptor like 4"/>
    <property type="match status" value="1"/>
</dbReference>
<dbReference type="Gene3D" id="2.60.40.10">
    <property type="entry name" value="Immunoglobulins"/>
    <property type="match status" value="4"/>
</dbReference>
<dbReference type="InterPro" id="IPR007110">
    <property type="entry name" value="Ig-like_dom"/>
</dbReference>
<dbReference type="InterPro" id="IPR036179">
    <property type="entry name" value="Ig-like_dom_sf"/>
</dbReference>
<dbReference type="InterPro" id="IPR013783">
    <property type="entry name" value="Ig-like_fold"/>
</dbReference>
<dbReference type="InterPro" id="IPR050488">
    <property type="entry name" value="Ig_Fc_receptor"/>
</dbReference>
<dbReference type="InterPro" id="IPR003599">
    <property type="entry name" value="Ig_sub"/>
</dbReference>
<dbReference type="InterPro" id="IPR003598">
    <property type="entry name" value="Ig_sub2"/>
</dbReference>
<dbReference type="InterPro" id="IPR013151">
    <property type="entry name" value="Immunoglobulin_dom"/>
</dbReference>
<dbReference type="PANTHER" id="PTHR11481:SF64">
    <property type="entry name" value="FC RECEPTOR-LIKE PROTEIN 4"/>
    <property type="match status" value="1"/>
</dbReference>
<dbReference type="PANTHER" id="PTHR11481">
    <property type="entry name" value="IMMUNOGLOBULIN FC RECEPTOR"/>
    <property type="match status" value="1"/>
</dbReference>
<dbReference type="Pfam" id="PF00047">
    <property type="entry name" value="ig"/>
    <property type="match status" value="1"/>
</dbReference>
<dbReference type="Pfam" id="PF13895">
    <property type="entry name" value="Ig_2"/>
    <property type="match status" value="1"/>
</dbReference>
<dbReference type="SMART" id="SM00409">
    <property type="entry name" value="IG"/>
    <property type="match status" value="4"/>
</dbReference>
<dbReference type="SMART" id="SM00408">
    <property type="entry name" value="IGc2"/>
    <property type="match status" value="4"/>
</dbReference>
<dbReference type="SUPFAM" id="SSF48726">
    <property type="entry name" value="Immunoglobulin"/>
    <property type="match status" value="4"/>
</dbReference>
<dbReference type="PROSITE" id="PS50835">
    <property type="entry name" value="IG_LIKE"/>
    <property type="match status" value="4"/>
</dbReference>
<evidence type="ECO:0000255" key="1"/>
<evidence type="ECO:0000255" key="2">
    <source>
        <dbReference type="PROSITE-ProRule" id="PRU00114"/>
    </source>
</evidence>
<evidence type="ECO:0000256" key="3">
    <source>
        <dbReference type="SAM" id="MobiDB-lite"/>
    </source>
</evidence>
<evidence type="ECO:0000269" key="4">
    <source>
    </source>
</evidence>
<evidence type="ECO:0000269" key="5">
    <source>
    </source>
</evidence>
<evidence type="ECO:0000269" key="6">
    <source>
    </source>
</evidence>
<evidence type="ECO:0000269" key="7">
    <source>
    </source>
</evidence>
<evidence type="ECO:0000269" key="8">
    <source>
    </source>
</evidence>
<evidence type="ECO:0000269" key="9">
    <source>
    </source>
</evidence>
<evidence type="ECO:0000269" key="10">
    <source>
    </source>
</evidence>
<evidence type="ECO:0000269" key="11">
    <source>
    </source>
</evidence>
<evidence type="ECO:0000303" key="12">
    <source>
    </source>
</evidence>
<evidence type="ECO:0000305" key="13"/>
<sequence>MLLWASLLAFAPVCGQSAAAHKPVISVHPPWTTFFKGERVTLTCNGFQFYATEKTTWYHRHYWGEKLTLTPGNTLEVRESGLYRCQARGSPRSNPVRLLFSSDSLILQAPYSVFEGDTLVLRCHRRRKEKLTAVKYTWNGNILSISNKSWDLLIPQASSNNNGNYRCIGYGDENDVFRSNFKIIKIQELFPHPELKATDSQPTEGNSVNLSCETQLPPERSDTPLHFNFFRDGEVILSDWSTYPELQLPTVWRENSGSYWCGAETVRGNIHKHSPSLQIHVQRIPVSGVLLETQPSGGQAVEGEMLVLVCSVAEGTGDTTFSWHREDMQESLGRKTQRSLRAELELPAIRQSHAGGYYCTADNSYGPVQSMVLNVTVRETPGNRDGLVAAGATGGLLSALLLAVALLFHCWRRRKSGVGFLGDETRLPPAPGPGESSHSICPAQVELQSLYVDVHPKKGDLVYSEIQTTQLGEEEEANTSRTLLEDKDVSVVYSEVKTQHPDNSAGKISSKDEES</sequence>
<protein>
    <recommendedName>
        <fullName>Fc receptor-like protein 4</fullName>
        <shortName>FcR-like protein 4</shortName>
        <shortName>FcRL4</shortName>
    </recommendedName>
    <alternativeName>
        <fullName>Fc receptor homolog 4</fullName>
        <shortName>FcRH4</shortName>
    </alternativeName>
    <alternativeName>
        <fullName>IFGP family protein 2</fullName>
        <shortName>hIFGP2</shortName>
    </alternativeName>
    <alternativeName>
        <fullName>Immune receptor translocation-associated protein 1</fullName>
    </alternativeName>
    <cdAntigenName>CD307d</cdAntigenName>
</protein>
<comment type="function">
    <text evidence="8">May function as an inhibitor of the B-cell receptor signaling. May function in the B-cell-mediated immune response.</text>
</comment>
<comment type="subunit">
    <text evidence="8">Interacts with PTPN6 and PTPN11.</text>
</comment>
<comment type="interaction">
    <interactant intactId="EBI-4314687">
        <id>Q96PJ5</id>
    </interactant>
    <interactant intactId="EBI-3922513">
        <id>O95393</id>
        <label>BMP10</label>
    </interactant>
    <organismsDiffer>false</organismsDiffer>
    <experiments>3</experiments>
</comment>
<comment type="interaction">
    <interactant intactId="EBI-4314687">
        <id>Q96PJ5</id>
    </interactant>
    <interactant intactId="EBI-398977">
        <id>Q9BUN8</id>
        <label>DERL1</label>
    </interactant>
    <organismsDiffer>false</organismsDiffer>
    <experiments>3</experiments>
</comment>
<comment type="interaction">
    <interactant intactId="EBI-4314687">
        <id>Q96PJ5</id>
    </interactant>
    <interactant intactId="EBI-740376">
        <id>Q86UW9</id>
        <label>DTX2</label>
    </interactant>
    <organismsDiffer>false</organismsDiffer>
    <experiments>3</experiments>
</comment>
<comment type="interaction">
    <interactant intactId="EBI-4314687">
        <id>Q96PJ5</id>
    </interactant>
    <interactant intactId="EBI-10266796">
        <id>Q8N5M9</id>
        <label>JAGN1</label>
    </interactant>
    <organismsDiffer>false</organismsDiffer>
    <experiments>3</experiments>
</comment>
<comment type="interaction">
    <interactant intactId="EBI-4314687">
        <id>Q96PJ5</id>
    </interactant>
    <interactant intactId="EBI-10317425">
        <id>Q9NZG7</id>
        <label>NINJ2</label>
    </interactant>
    <organismsDiffer>false</organismsDiffer>
    <experiments>3</experiments>
</comment>
<comment type="interaction">
    <interactant intactId="EBI-4314687">
        <id>Q96PJ5</id>
    </interactant>
    <interactant intactId="EBI-743871">
        <id>P04155</id>
        <label>TFF1</label>
    </interactant>
    <organismsDiffer>false</organismsDiffer>
    <experiments>3</experiments>
</comment>
<comment type="interaction">
    <interactant intactId="EBI-4314687">
        <id>Q96PJ5</id>
    </interactant>
    <interactant intactId="EBI-4314702">
        <id>Q03403</id>
        <label>TFF2</label>
    </interactant>
    <organismsDiffer>false</organismsDiffer>
    <experiments>3</experiments>
</comment>
<comment type="interaction">
    <interactant intactId="EBI-4314687">
        <id>Q96PJ5</id>
    </interactant>
    <interactant intactId="EBI-7254550">
        <id>P36508</id>
        <label>ZNF76</label>
    </interactant>
    <organismsDiffer>false</organismsDiffer>
    <experiments>3</experiments>
</comment>
<comment type="subcellular location">
    <subcellularLocation>
        <location evidence="10 11">Cell membrane</location>
        <topology evidence="10 11">Single-pass type I membrane protein</topology>
    </subcellularLocation>
</comment>
<comment type="alternative products">
    <event type="alternative splicing"/>
    <isoform>
        <id>Q96PJ5-1</id>
        <name>1</name>
        <sequence type="displayed"/>
    </isoform>
    <isoform>
        <id>Q96PJ5-2</id>
        <name>2</name>
        <sequence type="described" ref="VSP_033310"/>
    </isoform>
</comment>
<comment type="tissue specificity">
    <text evidence="4 5 7 9 10 11">Specifically expressed by memory and monocytoid B-cells which populate spleen and lymph nodes. Preferentially expressed in memory B-cells associated with mucosal tissue (at protein level).</text>
</comment>
<comment type="PTM">
    <text evidence="8">Phosphorylated on cytoplasmic tyrosines upon activation.</text>
</comment>
<comment type="disease">
    <text evidence="6">A chromosomal aberration involving FCRL4 is found in non-Hodgkin lymphoma (NHG). Translocation t(1;1)(p36.3; q21.1-2).</text>
</comment>
<comment type="disease">
    <text evidence="4">A chromosomal aberration involving FCRL4 is found in multiple myeloma (MM). Translocation t(1;14)(q21;q32) that forms a FCRL4-IGHA1 fusion protein.</text>
</comment>
<organism>
    <name type="scientific">Homo sapiens</name>
    <name type="common">Human</name>
    <dbReference type="NCBI Taxonomy" id="9606"/>
    <lineage>
        <taxon>Eukaryota</taxon>
        <taxon>Metazoa</taxon>
        <taxon>Chordata</taxon>
        <taxon>Craniata</taxon>
        <taxon>Vertebrata</taxon>
        <taxon>Euteleostomi</taxon>
        <taxon>Mammalia</taxon>
        <taxon>Eutheria</taxon>
        <taxon>Euarchontoglires</taxon>
        <taxon>Primates</taxon>
        <taxon>Haplorrhini</taxon>
        <taxon>Catarrhini</taxon>
        <taxon>Hominidae</taxon>
        <taxon>Homo</taxon>
    </lineage>
</organism>
<keyword id="KW-1064">Adaptive immunity</keyword>
<keyword id="KW-0025">Alternative splicing</keyword>
<keyword id="KW-1003">Cell membrane</keyword>
<keyword id="KW-0160">Chromosomal rearrangement</keyword>
<keyword id="KW-1015">Disulfide bond</keyword>
<keyword id="KW-0325">Glycoprotein</keyword>
<keyword id="KW-0391">Immunity</keyword>
<keyword id="KW-0393">Immunoglobulin domain</keyword>
<keyword id="KW-0472">Membrane</keyword>
<keyword id="KW-0597">Phosphoprotein</keyword>
<keyword id="KW-1267">Proteomics identification</keyword>
<keyword id="KW-0675">Receptor</keyword>
<keyword id="KW-1185">Reference proteome</keyword>
<keyword id="KW-0677">Repeat</keyword>
<keyword id="KW-0732">Signal</keyword>
<keyword id="KW-0812">Transmembrane</keyword>
<keyword id="KW-1133">Transmembrane helix</keyword>
<reference key="1">
    <citation type="journal article" date="2001" name="Immunity">
        <title>IRTA1 and IRTA2, novel immunoglobulin superfamily receptors expressed in B cells and involved in chromosome 1q21 abnormalities in B cell malignancy.</title>
        <authorList>
            <person name="Hatzivassiliou G."/>
            <person name="Miller I."/>
            <person name="Takizawa J."/>
            <person name="Palanisamy N."/>
            <person name="Rao P.H."/>
            <person name="Iida S."/>
            <person name="Tagawa S."/>
            <person name="Taniwaki M."/>
            <person name="Russo J."/>
            <person name="Neri A."/>
            <person name="Cattoretti G."/>
            <person name="Clynes R."/>
            <person name="Mendelsohn C."/>
            <person name="Chaganti R.S.K."/>
            <person name="Dalla-Favera R."/>
        </authorList>
    </citation>
    <scope>NUCLEOTIDE SEQUENCE [MRNA] (ISOFORM 1)</scope>
    <scope>TISSUE SPECIFICITY</scope>
    <scope>CHROMOSOMAL TRANSLOCATION WITH IGHA1</scope>
    <scope>INVOLVEMENT IN MM</scope>
    <source>
        <tissue>Spleen</tissue>
    </source>
</reference>
<reference key="2">
    <citation type="journal article" date="2001" name="Proc. Natl. Acad. Sci. U.S.A.">
        <title>Identification of a family of Fc receptor homologs with preferential B cell expression.</title>
        <authorList>
            <person name="Davis R.S."/>
            <person name="Wang Y.-H."/>
            <person name="Kubagawa H."/>
            <person name="Cooper M.D."/>
        </authorList>
    </citation>
    <scope>NUCLEOTIDE SEQUENCE [MRNA] (ISOFORM 1)</scope>
    <source>
        <tissue>Lymph node</tissue>
    </source>
</reference>
<reference key="3">
    <citation type="journal article" date="2002" name="Immunogenetics">
        <title>A family of highly diverse human and mouse genes structurally links leukocyte FcR, gp42 and PECAM-1.</title>
        <authorList>
            <person name="Guselnikov S.V."/>
            <person name="Ershova S.A."/>
            <person name="Mechetina L.V."/>
            <person name="Najakshin A.M."/>
            <person name="Volkova O.Y."/>
            <person name="Alabyev B.Y."/>
            <person name="Taranin A.V."/>
        </authorList>
    </citation>
    <scope>NUCLEOTIDE SEQUENCE [MRNA] (ISOFORM 1)</scope>
    <scope>NUCLEOTIDE SEQUENCE [MRNA] OF 88-515 (ISOFORM 2)</scope>
    <source>
        <tissue>Tonsil</tissue>
    </source>
</reference>
<reference key="4">
    <citation type="submission" date="2006-10" db="EMBL/GenBank/DDBJ databases">
        <authorList>
            <person name="Livingston R.J."/>
            <person name="Shaffer T."/>
            <person name="McFarland I."/>
            <person name="Nguyen C.P."/>
            <person name="Stanaway I.B."/>
            <person name="Rajkumar N."/>
            <person name="Johnson E.J."/>
            <person name="da Ponte S.H."/>
            <person name="Willa H."/>
            <person name="Ahearn M.O."/>
            <person name="Bertucci C."/>
            <person name="Acklestad J."/>
            <person name="Carroll A."/>
            <person name="Swanson J."/>
            <person name="Gildersleeve H.I."/>
            <person name="Nickerson D.A."/>
        </authorList>
    </citation>
    <scope>NUCLEOTIDE SEQUENCE [GENOMIC DNA] (ISOFORM 1)</scope>
</reference>
<reference key="5">
    <citation type="submission" date="2005-09" db="EMBL/GenBank/DDBJ databases">
        <authorList>
            <person name="Mural R.J."/>
            <person name="Istrail S."/>
            <person name="Sutton G.G."/>
            <person name="Florea L."/>
            <person name="Halpern A.L."/>
            <person name="Mobarry C.M."/>
            <person name="Lippert R."/>
            <person name="Walenz B."/>
            <person name="Shatkay H."/>
            <person name="Dew I."/>
            <person name="Miller J.R."/>
            <person name="Flanigan M.J."/>
            <person name="Edwards N.J."/>
            <person name="Bolanos R."/>
            <person name="Fasulo D."/>
            <person name="Halldorsson B.V."/>
            <person name="Hannenhalli S."/>
            <person name="Turner R."/>
            <person name="Yooseph S."/>
            <person name="Lu F."/>
            <person name="Nusskern D.R."/>
            <person name="Shue B.C."/>
            <person name="Zheng X.H."/>
            <person name="Zhong F."/>
            <person name="Delcher A.L."/>
            <person name="Huson D.H."/>
            <person name="Kravitz S.A."/>
            <person name="Mouchard L."/>
            <person name="Reinert K."/>
            <person name="Remington K.A."/>
            <person name="Clark A.G."/>
            <person name="Waterman M.S."/>
            <person name="Eichler E.E."/>
            <person name="Adams M.D."/>
            <person name="Hunkapiller M.W."/>
            <person name="Myers E.W."/>
            <person name="Venter J.C."/>
        </authorList>
    </citation>
    <scope>NUCLEOTIDE SEQUENCE [LARGE SCALE GENOMIC DNA]</scope>
</reference>
<reference key="6">
    <citation type="journal article" date="2004" name="Genome Res.">
        <title>The status, quality, and expansion of the NIH full-length cDNA project: the Mammalian Gene Collection (MGC).</title>
        <authorList>
            <consortium name="The MGC Project Team"/>
        </authorList>
    </citation>
    <scope>NUCLEOTIDE SEQUENCE [LARGE SCALE MRNA] (ISOFORM 1)</scope>
</reference>
<reference key="7">
    <citation type="journal article" date="2002" name="Blood">
        <title>IRTAs: a new family of immunoglobulin-like receptors differentially expressed in B cells.</title>
        <authorList>
            <person name="Miller I."/>
            <person name="Hatzivassiliou G."/>
            <person name="Cattoretti G."/>
            <person name="Mendelsohn C."/>
            <person name="Dalla-Favera R."/>
        </authorList>
    </citation>
    <scope>CHARACTERIZATION</scope>
    <scope>TISSUE SPECIFICITY</scope>
</reference>
<reference key="8">
    <citation type="journal article" date="2003" name="Blood">
        <title>Expression of the IRTA1 receptor identifies intraepithelial and subepithelial marginal zone B cells of the mucosa-associated lymphoid tissue (MALT).</title>
        <authorList>
            <person name="Falini B."/>
            <person name="Tiacci E."/>
            <person name="Pucciarini A."/>
            <person name="Bigerna B."/>
            <person name="Kurth J."/>
            <person name="Hatzivassiliou G."/>
            <person name="Droetto S."/>
            <person name="Galletti B.V."/>
            <person name="Gambacorta M."/>
            <person name="Orazi A."/>
            <person name="Pasqualucci L."/>
            <person name="Miller I."/>
            <person name="Kueppers R."/>
            <person name="Dalla-Favera R."/>
            <person name="Cattoretti G."/>
        </authorList>
    </citation>
    <scope>TISSUE SPECIFICITY</scope>
</reference>
<reference key="9">
    <citation type="journal article" date="2003" name="Genes Chromosomes Cancer">
        <title>Characterization of the recurrent translocation t(1;1)(p36.3;q21.1-2) in non-Hodgkin lymphoma by multicolor banding and fluorescence in situ hybridization analysis.</title>
        <authorList>
            <person name="Lestou V.S."/>
            <person name="Ludkovski O."/>
            <person name="Connors J.M."/>
            <person name="Gascoyne R.D."/>
            <person name="Lam W.L."/>
            <person name="Horsman D.E."/>
        </authorList>
    </citation>
    <scope>CHROMOSOMAL TRANSLOCATION</scope>
    <scope>INVOLVEMENT IN NHG</scope>
</reference>
<reference key="10">
    <citation type="journal article" date="2003" name="Proc. Natl. Acad. Sci. U.S.A.">
        <title>The inhibitory potential of Fc receptor homolog 4 on memory B cells.</title>
        <authorList>
            <person name="Ehrhardt G.R.A."/>
            <person name="Davis R.S."/>
            <person name="Hsu J.T."/>
            <person name="Leu C.-M."/>
            <person name="Ehrhardt A."/>
            <person name="Cooper M.D."/>
        </authorList>
    </citation>
    <scope>FUNCTION</scope>
    <scope>PHOSPHORYLATION</scope>
    <scope>MUTAGENESIS OF TYR-451; TYR-463 AND TYR-493</scope>
    <scope>INTERACTION WITH PTPN6 AND PTPN11</scope>
</reference>
<reference key="11">
    <citation type="journal article" date="2005" name="Haematologica">
        <title>T-bet-positive and IRTA1-positive monocytoid B cells differ from marginal zone B cells and epithelial-associated B cells in their antigen profile and topographical distribution.</title>
        <authorList>
            <person name="Joehrens K."/>
            <person name="Shimizu Y."/>
            <person name="Anagnostopoulos I."/>
            <person name="Schiffmann S."/>
            <person name="Tiacci E."/>
            <person name="Falini B."/>
            <person name="Stein H."/>
        </authorList>
    </citation>
    <scope>TISSUE SPECIFICITY</scope>
</reference>
<reference key="12">
    <citation type="journal article" date="2005" name="J. Exp. Med.">
        <title>Expression of the immunoregulatory molecule FcRH4 defines a distinctive tissue-based population of memory B cells.</title>
        <authorList>
            <person name="Ehrhardt G.R.A."/>
            <person name="Hsu J.T."/>
            <person name="Gartland L."/>
            <person name="Leu C.-M."/>
            <person name="Zhang S."/>
            <person name="Davis R.S."/>
            <person name="Cooper M.D."/>
        </authorList>
    </citation>
    <scope>SUBCELLULAR LOCATION</scope>
    <scope>TISSUE SPECIFICITY</scope>
</reference>
<reference key="13">
    <citation type="journal article" date="2006" name="Int. Immunol.">
        <title>Expression pattern of the human FcRH/IRTA receptors in normal tissue and in B-chronic lymphocytic leukemia.</title>
        <authorList>
            <person name="Polson A.G."/>
            <person name="Zheng B."/>
            <person name="Elkins K."/>
            <person name="Chang W."/>
            <person name="Du C."/>
            <person name="Dowd P."/>
            <person name="Yen L."/>
            <person name="Tan C."/>
            <person name="Hongo J.-A."/>
            <person name="Koeppen H."/>
            <person name="Ebens A."/>
        </authorList>
    </citation>
    <scope>SUBCELLULAR LOCATION</scope>
    <scope>TISSUE SPECIFICITY</scope>
</reference>
<gene>
    <name type="primary">FCRL4</name>
    <name type="synonym">FCRH4</name>
    <name type="synonym">IFGP2</name>
    <name type="synonym">IRTA1</name>
</gene>
<name>FCRL4_HUMAN</name>
<feature type="signal peptide" evidence="1">
    <location>
        <begin position="1"/>
        <end position="19"/>
    </location>
</feature>
<feature type="chain" id="PRO_0000331642" description="Fc receptor-like protein 4">
    <location>
        <begin position="20"/>
        <end position="515"/>
    </location>
</feature>
<feature type="topological domain" description="Extracellular" evidence="1">
    <location>
        <begin position="20"/>
        <end position="387"/>
    </location>
</feature>
<feature type="transmembrane region" description="Helical" evidence="1">
    <location>
        <begin position="388"/>
        <end position="408"/>
    </location>
</feature>
<feature type="topological domain" description="Cytoplasmic" evidence="1">
    <location>
        <begin position="409"/>
        <end position="515"/>
    </location>
</feature>
<feature type="domain" description="Ig-like C2-type 1">
    <location>
        <begin position="23"/>
        <end position="97"/>
    </location>
</feature>
<feature type="domain" description="Ig-like C2-type 2">
    <location>
        <begin position="102"/>
        <end position="183"/>
    </location>
</feature>
<feature type="domain" description="Ig-like C2-type 3">
    <location>
        <begin position="193"/>
        <end position="271"/>
    </location>
</feature>
<feature type="domain" description="Ig-like C2-type 4">
    <location>
        <begin position="275"/>
        <end position="374"/>
    </location>
</feature>
<feature type="region of interest" description="Disordered" evidence="3">
    <location>
        <begin position="494"/>
        <end position="515"/>
    </location>
</feature>
<feature type="short sequence motif" description="ITIM motif 1">
    <location>
        <begin position="449"/>
        <end position="454"/>
    </location>
</feature>
<feature type="short sequence motif" description="ITIM motif 2">
    <location>
        <begin position="461"/>
        <end position="466"/>
    </location>
</feature>
<feature type="short sequence motif" description="ITIM motif 3">
    <location>
        <begin position="491"/>
        <end position="496"/>
    </location>
</feature>
<feature type="site" description="Breakpoint for insertion to form FCRL4-IGHA1 fusion protein">
    <location>
        <begin position="17"/>
        <end position="18"/>
    </location>
</feature>
<feature type="glycosylation site" description="N-linked (GlcNAc...) asparagine" evidence="1">
    <location>
        <position position="374"/>
    </location>
</feature>
<feature type="disulfide bond" evidence="2">
    <location>
        <begin position="44"/>
        <end position="85"/>
    </location>
</feature>
<feature type="disulfide bond" evidence="2">
    <location>
        <begin position="123"/>
        <end position="167"/>
    </location>
</feature>
<feature type="disulfide bond" evidence="2">
    <location>
        <begin position="212"/>
        <end position="261"/>
    </location>
</feature>
<feature type="disulfide bond" evidence="2">
    <location>
        <begin position="310"/>
        <end position="359"/>
    </location>
</feature>
<feature type="splice variant" id="VSP_033310" description="In isoform 2." evidence="12">
    <original>VHPKKGDLVYSEIQTTQLGEEEEANTSRTLLEDKDVSVVYSEVKTQHPDNSAGKISSKDEES</original>
    <variation>GEDSLLGSCSWPQPWKDNALSALGNAPGLPKVSQIQIFPDIMCPRRVEMMLRKRHL</variation>
    <location>
        <begin position="454"/>
        <end position="515"/>
    </location>
</feature>
<feature type="sequence variant" id="VAR_042929" description="In dbSNP:rs11582663.">
    <original>R</original>
    <variation>Q</variation>
    <location>
        <position position="60"/>
    </location>
</feature>
<feature type="sequence variant" id="VAR_042930" description="In dbSNP:rs4561035.">
    <original>N</original>
    <variation>S</variation>
    <location>
        <position position="255"/>
    </location>
</feature>
<feature type="sequence variant" id="VAR_042931" description="In dbSNP:rs2039401.">
    <original>K</original>
    <variation>R</variation>
    <location>
        <position position="457"/>
    </location>
</feature>
<feature type="sequence variant" id="VAR_042932" description="In dbSNP:rs3811028.">
    <original>Y</original>
    <variation>C</variation>
    <location>
        <position position="493"/>
    </location>
</feature>
<feature type="mutagenesis site" description="No effect on function, phosphorylation and interaction with PTPN6 and PTPN11." evidence="8">
    <original>Y</original>
    <variation>F</variation>
    <location>
        <position position="451"/>
    </location>
</feature>
<feature type="mutagenesis site" description="Loss of function, phosphorylation and interaction with PTPN6 and PTPN11." evidence="8">
    <original>Y</original>
    <variation>F</variation>
    <location>
        <position position="463"/>
    </location>
</feature>
<feature type="mutagenesis site" description="Loss of interaction with PTPN6 and PTPN11 and partial loss of function and phosphorylation." evidence="8">
    <original>Y</original>
    <variation>F</variation>
    <location>
        <position position="493"/>
    </location>
</feature>
<feature type="sequence conflict" description="In Ref. 2; AAK93970." evidence="13" ref="2">
    <original>S</original>
    <variation>L</variation>
    <location>
        <position position="179"/>
    </location>
</feature>
<proteinExistence type="evidence at protein level"/>
<accession>Q96PJ5</accession>
<accession>Q96PJ3</accession>
<accession>Q96RE0</accession>